<name>SYH_SYNE7</name>
<dbReference type="EC" id="6.1.1.21" evidence="1"/>
<dbReference type="EMBL" id="CP000100">
    <property type="protein sequence ID" value="ABB58293.1"/>
    <property type="molecule type" value="Genomic_DNA"/>
</dbReference>
<dbReference type="RefSeq" id="WP_011378381.1">
    <property type="nucleotide sequence ID" value="NZ_JACJTX010000001.1"/>
</dbReference>
<dbReference type="SMR" id="Q31KX6"/>
<dbReference type="STRING" id="1140.Synpcc7942_2263"/>
<dbReference type="PaxDb" id="1140-Synpcc7942_2263"/>
<dbReference type="GeneID" id="72431149"/>
<dbReference type="KEGG" id="syf:Synpcc7942_2263"/>
<dbReference type="eggNOG" id="COG0124">
    <property type="taxonomic scope" value="Bacteria"/>
</dbReference>
<dbReference type="HOGENOM" id="CLU_025113_1_1_3"/>
<dbReference type="OrthoDB" id="9800814at2"/>
<dbReference type="BioCyc" id="SYNEL:SYNPCC7942_2263-MONOMER"/>
<dbReference type="Proteomes" id="UP000889800">
    <property type="component" value="Chromosome"/>
</dbReference>
<dbReference type="GO" id="GO:0005737">
    <property type="term" value="C:cytoplasm"/>
    <property type="evidence" value="ECO:0007669"/>
    <property type="project" value="UniProtKB-SubCell"/>
</dbReference>
<dbReference type="GO" id="GO:0005524">
    <property type="term" value="F:ATP binding"/>
    <property type="evidence" value="ECO:0007669"/>
    <property type="project" value="UniProtKB-UniRule"/>
</dbReference>
<dbReference type="GO" id="GO:0004821">
    <property type="term" value="F:histidine-tRNA ligase activity"/>
    <property type="evidence" value="ECO:0007669"/>
    <property type="project" value="UniProtKB-UniRule"/>
</dbReference>
<dbReference type="GO" id="GO:0006427">
    <property type="term" value="P:histidyl-tRNA aminoacylation"/>
    <property type="evidence" value="ECO:0007669"/>
    <property type="project" value="UniProtKB-UniRule"/>
</dbReference>
<dbReference type="CDD" id="cd00773">
    <property type="entry name" value="HisRS-like_core"/>
    <property type="match status" value="1"/>
</dbReference>
<dbReference type="CDD" id="cd00859">
    <property type="entry name" value="HisRS_anticodon"/>
    <property type="match status" value="1"/>
</dbReference>
<dbReference type="FunFam" id="3.30.930.10:FF:000005">
    <property type="entry name" value="Histidine--tRNA ligase"/>
    <property type="match status" value="1"/>
</dbReference>
<dbReference type="Gene3D" id="3.40.50.800">
    <property type="entry name" value="Anticodon-binding domain"/>
    <property type="match status" value="1"/>
</dbReference>
<dbReference type="Gene3D" id="3.30.930.10">
    <property type="entry name" value="Bira Bifunctional Protein, Domain 2"/>
    <property type="match status" value="1"/>
</dbReference>
<dbReference type="HAMAP" id="MF_00127">
    <property type="entry name" value="His_tRNA_synth"/>
    <property type="match status" value="1"/>
</dbReference>
<dbReference type="InterPro" id="IPR006195">
    <property type="entry name" value="aa-tRNA-synth_II"/>
</dbReference>
<dbReference type="InterPro" id="IPR045864">
    <property type="entry name" value="aa-tRNA-synth_II/BPL/LPL"/>
</dbReference>
<dbReference type="InterPro" id="IPR004154">
    <property type="entry name" value="Anticodon-bd"/>
</dbReference>
<dbReference type="InterPro" id="IPR036621">
    <property type="entry name" value="Anticodon-bd_dom_sf"/>
</dbReference>
<dbReference type="InterPro" id="IPR015807">
    <property type="entry name" value="His-tRNA-ligase"/>
</dbReference>
<dbReference type="InterPro" id="IPR041715">
    <property type="entry name" value="HisRS-like_core"/>
</dbReference>
<dbReference type="InterPro" id="IPR004516">
    <property type="entry name" value="HisRS/HisZ"/>
</dbReference>
<dbReference type="InterPro" id="IPR033656">
    <property type="entry name" value="HisRS_anticodon"/>
</dbReference>
<dbReference type="NCBIfam" id="TIGR00442">
    <property type="entry name" value="hisS"/>
    <property type="match status" value="1"/>
</dbReference>
<dbReference type="PANTHER" id="PTHR43707:SF1">
    <property type="entry name" value="HISTIDINE--TRNA LIGASE, MITOCHONDRIAL-RELATED"/>
    <property type="match status" value="1"/>
</dbReference>
<dbReference type="PANTHER" id="PTHR43707">
    <property type="entry name" value="HISTIDYL-TRNA SYNTHETASE"/>
    <property type="match status" value="1"/>
</dbReference>
<dbReference type="Pfam" id="PF03129">
    <property type="entry name" value="HGTP_anticodon"/>
    <property type="match status" value="1"/>
</dbReference>
<dbReference type="Pfam" id="PF13393">
    <property type="entry name" value="tRNA-synt_His"/>
    <property type="match status" value="1"/>
</dbReference>
<dbReference type="PIRSF" id="PIRSF001549">
    <property type="entry name" value="His-tRNA_synth"/>
    <property type="match status" value="1"/>
</dbReference>
<dbReference type="SUPFAM" id="SSF52954">
    <property type="entry name" value="Class II aaRS ABD-related"/>
    <property type="match status" value="1"/>
</dbReference>
<dbReference type="SUPFAM" id="SSF55681">
    <property type="entry name" value="Class II aaRS and biotin synthetases"/>
    <property type="match status" value="1"/>
</dbReference>
<dbReference type="PROSITE" id="PS50862">
    <property type="entry name" value="AA_TRNA_LIGASE_II"/>
    <property type="match status" value="1"/>
</dbReference>
<proteinExistence type="inferred from homology"/>
<comment type="catalytic activity">
    <reaction evidence="1">
        <text>tRNA(His) + L-histidine + ATP = L-histidyl-tRNA(His) + AMP + diphosphate + H(+)</text>
        <dbReference type="Rhea" id="RHEA:17313"/>
        <dbReference type="Rhea" id="RHEA-COMP:9665"/>
        <dbReference type="Rhea" id="RHEA-COMP:9689"/>
        <dbReference type="ChEBI" id="CHEBI:15378"/>
        <dbReference type="ChEBI" id="CHEBI:30616"/>
        <dbReference type="ChEBI" id="CHEBI:33019"/>
        <dbReference type="ChEBI" id="CHEBI:57595"/>
        <dbReference type="ChEBI" id="CHEBI:78442"/>
        <dbReference type="ChEBI" id="CHEBI:78527"/>
        <dbReference type="ChEBI" id="CHEBI:456215"/>
        <dbReference type="EC" id="6.1.1.21"/>
    </reaction>
</comment>
<comment type="subunit">
    <text evidence="1">Homodimer.</text>
</comment>
<comment type="subcellular location">
    <subcellularLocation>
        <location evidence="1">Cytoplasm</location>
    </subcellularLocation>
</comment>
<comment type="similarity">
    <text evidence="1">Belongs to the class-II aminoacyl-tRNA synthetase family.</text>
</comment>
<organism>
    <name type="scientific">Synechococcus elongatus (strain ATCC 33912 / PCC 7942 / FACHB-805)</name>
    <name type="common">Anacystis nidulans R2</name>
    <dbReference type="NCBI Taxonomy" id="1140"/>
    <lineage>
        <taxon>Bacteria</taxon>
        <taxon>Bacillati</taxon>
        <taxon>Cyanobacteriota</taxon>
        <taxon>Cyanophyceae</taxon>
        <taxon>Synechococcales</taxon>
        <taxon>Synechococcaceae</taxon>
        <taxon>Synechococcus</taxon>
    </lineage>
</organism>
<reference key="1">
    <citation type="submission" date="2005-08" db="EMBL/GenBank/DDBJ databases">
        <title>Complete sequence of chromosome 1 of Synechococcus elongatus PCC 7942.</title>
        <authorList>
            <consortium name="US DOE Joint Genome Institute"/>
            <person name="Copeland A."/>
            <person name="Lucas S."/>
            <person name="Lapidus A."/>
            <person name="Barry K."/>
            <person name="Detter J.C."/>
            <person name="Glavina T."/>
            <person name="Hammon N."/>
            <person name="Israni S."/>
            <person name="Pitluck S."/>
            <person name="Schmutz J."/>
            <person name="Larimer F."/>
            <person name="Land M."/>
            <person name="Kyrpides N."/>
            <person name="Lykidis A."/>
            <person name="Golden S."/>
            <person name="Richardson P."/>
        </authorList>
    </citation>
    <scope>NUCLEOTIDE SEQUENCE [LARGE SCALE GENOMIC DNA]</scope>
    <source>
        <strain>ATCC 33912 / PCC 7942 / FACHB-805</strain>
    </source>
</reference>
<keyword id="KW-0030">Aminoacyl-tRNA synthetase</keyword>
<keyword id="KW-0067">ATP-binding</keyword>
<keyword id="KW-0963">Cytoplasm</keyword>
<keyword id="KW-0436">Ligase</keyword>
<keyword id="KW-0547">Nucleotide-binding</keyword>
<keyword id="KW-0648">Protein biosynthesis</keyword>
<keyword id="KW-1185">Reference proteome</keyword>
<accession>Q31KX6</accession>
<protein>
    <recommendedName>
        <fullName evidence="1">Histidine--tRNA ligase</fullName>
        <ecNumber evidence="1">6.1.1.21</ecNumber>
    </recommendedName>
    <alternativeName>
        <fullName evidence="1">Histidyl-tRNA synthetase</fullName>
        <shortName evidence="1">HisRS</shortName>
    </alternativeName>
</protein>
<gene>
    <name evidence="1" type="primary">hisS</name>
    <name type="ordered locus">Synpcc7942_2263</name>
</gene>
<evidence type="ECO:0000255" key="1">
    <source>
        <dbReference type="HAMAP-Rule" id="MF_00127"/>
    </source>
</evidence>
<feature type="chain" id="PRO_1000016471" description="Histidine--tRNA ligase">
    <location>
        <begin position="1"/>
        <end position="435"/>
    </location>
</feature>
<sequence length="435" mass="47965">MASLQALRGTRDILPPETQVWQWIEQTAREILGRAAVQEVRTPIFEQTALFERGIGEATDVVGKEMYSFRDRGDRSLTLRPEGTAGTVRAYIEHGLASQGGVQRLWYTGPMFRYERPQAGRQRQFHQLGLELLGTADARADAEAIALATQILQALGLKNLRLDLNSVGDASDRAAYRQALVDYLTPYAADLDPDSRDRLERNPLRILDSKDERTQAIVAEAPSLHDYLSERSRQLFEQVQQLLTHLGIDYRLEPKLVRGLDYYTHTAFEIISSDLGAQATVCGGGRYDGLVSQLGGPETPAVGWAMGLERLVLLLQQGQAVPPATLDFYLVSRGAIAEGQALILAQKLRSAGFGVELDLSGSAFGKQFKRADRSGAIACLVLGDAEAEQGQVNLKWLQSGEQQTLDQSELLQDSDHWRSRLQAARTVSPVEVAPL</sequence>